<gene>
    <name type="ORF">AFUA_4G14450</name>
</gene>
<proteinExistence type="evidence at protein level"/>
<reference key="1">
    <citation type="journal article" date="2005" name="Nature">
        <title>Genomic sequence of the pathogenic and allergenic filamentous fungus Aspergillus fumigatus.</title>
        <authorList>
            <person name="Nierman W.C."/>
            <person name="Pain A."/>
            <person name="Anderson M.J."/>
            <person name="Wortman J.R."/>
            <person name="Kim H.S."/>
            <person name="Arroyo J."/>
            <person name="Berriman M."/>
            <person name="Abe K."/>
            <person name="Archer D.B."/>
            <person name="Bermejo C."/>
            <person name="Bennett J.W."/>
            <person name="Bowyer P."/>
            <person name="Chen D."/>
            <person name="Collins M."/>
            <person name="Coulsen R."/>
            <person name="Davies R."/>
            <person name="Dyer P.S."/>
            <person name="Farman M.L."/>
            <person name="Fedorova N."/>
            <person name="Fedorova N.D."/>
            <person name="Feldblyum T.V."/>
            <person name="Fischer R."/>
            <person name="Fosker N."/>
            <person name="Fraser A."/>
            <person name="Garcia J.L."/>
            <person name="Garcia M.J."/>
            <person name="Goble A."/>
            <person name="Goldman G.H."/>
            <person name="Gomi K."/>
            <person name="Griffith-Jones S."/>
            <person name="Gwilliam R."/>
            <person name="Haas B.J."/>
            <person name="Haas H."/>
            <person name="Harris D.E."/>
            <person name="Horiuchi H."/>
            <person name="Huang J."/>
            <person name="Humphray S."/>
            <person name="Jimenez J."/>
            <person name="Keller N."/>
            <person name="Khouri H."/>
            <person name="Kitamoto K."/>
            <person name="Kobayashi T."/>
            <person name="Konzack S."/>
            <person name="Kulkarni R."/>
            <person name="Kumagai T."/>
            <person name="Lafton A."/>
            <person name="Latge J.-P."/>
            <person name="Li W."/>
            <person name="Lord A."/>
            <person name="Lu C."/>
            <person name="Majoros W.H."/>
            <person name="May G.S."/>
            <person name="Miller B.L."/>
            <person name="Mohamoud Y."/>
            <person name="Molina M."/>
            <person name="Monod M."/>
            <person name="Mouyna I."/>
            <person name="Mulligan S."/>
            <person name="Murphy L.D."/>
            <person name="O'Neil S."/>
            <person name="Paulsen I."/>
            <person name="Penalva M.A."/>
            <person name="Pertea M."/>
            <person name="Price C."/>
            <person name="Pritchard B.L."/>
            <person name="Quail M.A."/>
            <person name="Rabbinowitsch E."/>
            <person name="Rawlins N."/>
            <person name="Rajandream M.A."/>
            <person name="Reichard U."/>
            <person name="Renauld H."/>
            <person name="Robson G.D."/>
            <person name="Rodriguez de Cordoba S."/>
            <person name="Rodriguez-Pena J.M."/>
            <person name="Ronning C.M."/>
            <person name="Rutter S."/>
            <person name="Salzberg S.L."/>
            <person name="Sanchez M."/>
            <person name="Sanchez-Ferrero J.C."/>
            <person name="Saunders D."/>
            <person name="Seeger K."/>
            <person name="Squares R."/>
            <person name="Squares S."/>
            <person name="Takeuchi M."/>
            <person name="Tekaia F."/>
            <person name="Turner G."/>
            <person name="Vazquez de Aldana C.R."/>
            <person name="Weidman J."/>
            <person name="White O."/>
            <person name="Woodward J.R."/>
            <person name="Yu J.-H."/>
            <person name="Fraser C.M."/>
            <person name="Galagan J.E."/>
            <person name="Asai K."/>
            <person name="Machida M."/>
            <person name="Hall N."/>
            <person name="Barrell B.G."/>
            <person name="Denning D.W."/>
        </authorList>
    </citation>
    <scope>NUCLEOTIDE SEQUENCE [LARGE SCALE GENOMIC DNA]</scope>
    <source>
        <strain>ATCC MYA-4609 / CBS 101355 / FGSC A1100 / Af293</strain>
    </source>
</reference>
<reference key="2">
    <citation type="journal article" date="2009" name="Chem. Biol. Interact.">
        <title>Polyol-specific long-chain dehydrogenases/reductases of mannitol metabolism in Aspergillus fumigatus: biochemical characterization and pH studies of mannitol 2-dehydrogenase and mannitol-1-phosphate 5-dehydrogenase.</title>
        <authorList>
            <person name="Krahulec S."/>
            <person name="Armao G.C."/>
            <person name="Bubner P."/>
            <person name="Klimacek M."/>
            <person name="Nidetzky B."/>
        </authorList>
    </citation>
    <scope>FUNCTION</scope>
    <scope>BIOPHYSICOCHEMICAL PROPERTIES</scope>
    <scope>SUBUNIT</scope>
    <scope>CATALYTIC ACTIVITY</scope>
</reference>
<organism>
    <name type="scientific">Aspergillus fumigatus (strain ATCC MYA-4609 / CBS 101355 / FGSC A1100 / Af293)</name>
    <name type="common">Neosartorya fumigata</name>
    <dbReference type="NCBI Taxonomy" id="330879"/>
    <lineage>
        <taxon>Eukaryota</taxon>
        <taxon>Fungi</taxon>
        <taxon>Dikarya</taxon>
        <taxon>Ascomycota</taxon>
        <taxon>Pezizomycotina</taxon>
        <taxon>Eurotiomycetes</taxon>
        <taxon>Eurotiomycetidae</taxon>
        <taxon>Eurotiales</taxon>
        <taxon>Aspergillaceae</taxon>
        <taxon>Aspergillus</taxon>
        <taxon>Aspergillus subgen. Fumigati</taxon>
    </lineage>
</organism>
<name>M2DH_ASPFU</name>
<sequence>MAPLKLNSRNLSQIAAAGGALVKIPTYQRGRAVKEGIVHIGVGGFHRAHLAVYIDQLMQKHGVNDYAICGVGLQPFDSAMRDALASQDHLYTLIERSAKGSFAHVIGSINSYLFAPDNREAVIAKMAHPDTKIVSLTITESGYYYNENTHELQSEHPDIQFDLDPANEKAPRTTFGFLYAGLTRRYQQGLKPFTVMSCDNMQKNGSITRHMLESFARLRNPEVAEWIAEEGAFPNAMVDRITPQTSETDKTALAEKFGIVDSWPVVTEPFTQWVIEDQFSDGRPPFEKVGVQVVKDVHAVEQFEKHKLRLLNGSHSALGYPGQLAGFQYVHEVMANPLFRKFVWQMMQEEVKPLLPEIPGVDIDEYCNTLIERFTNPTIMDQLPRICLNASGKIPQFIMPSIAEAIWETGPFRRLCFVAAAWFHYIKGVDDRGKPFEVVDPMREELQAKARAGGNDPSELLSIKSLFGDDLRNDERFLREITTAMNDIARDGIMKTLPKYIN</sequence>
<protein>
    <recommendedName>
        <fullName>Mannitol 2-dehydrogenase</fullName>
        <shortName>M2DH</shortName>
        <shortName>MDH</shortName>
        <ecNumber evidence="2">1.1.1.67</ecNumber>
    </recommendedName>
</protein>
<dbReference type="EC" id="1.1.1.67" evidence="2"/>
<dbReference type="EMBL" id="AAHF01000005">
    <property type="protein sequence ID" value="EAL89350.1"/>
    <property type="molecule type" value="Genomic_DNA"/>
</dbReference>
<dbReference type="RefSeq" id="XP_751388.1">
    <property type="nucleotide sequence ID" value="XM_746295.1"/>
</dbReference>
<dbReference type="PDB" id="7RK4">
    <property type="method" value="X-ray"/>
    <property type="resolution" value="1.80 A"/>
    <property type="chains" value="A/B=1-502"/>
</dbReference>
<dbReference type="PDB" id="7RK5">
    <property type="method" value="X-ray"/>
    <property type="resolution" value="2.10 A"/>
    <property type="chains" value="A/B=1-502"/>
</dbReference>
<dbReference type="PDBsum" id="7RK4"/>
<dbReference type="PDBsum" id="7RK5"/>
<dbReference type="SMR" id="Q4WQY4"/>
<dbReference type="FunCoup" id="Q4WQY4">
    <property type="interactions" value="52"/>
</dbReference>
<dbReference type="STRING" id="330879.Q4WQY4"/>
<dbReference type="EnsemblFungi" id="EAL89350">
    <property type="protein sequence ID" value="EAL89350"/>
    <property type="gene ID" value="AFUA_4G14450"/>
</dbReference>
<dbReference type="GeneID" id="3509495"/>
<dbReference type="KEGG" id="afm:AFUA_4G14450"/>
<dbReference type="VEuPathDB" id="FungiDB:Afu4g14450"/>
<dbReference type="eggNOG" id="ENOG502QT30">
    <property type="taxonomic scope" value="Eukaryota"/>
</dbReference>
<dbReference type="HOGENOM" id="CLU_027324_0_1_1"/>
<dbReference type="InParanoid" id="Q4WQY4"/>
<dbReference type="OMA" id="IVASWAR"/>
<dbReference type="OrthoDB" id="418169at2759"/>
<dbReference type="BRENDA" id="1.1.1.67">
    <property type="organism ID" value="508"/>
</dbReference>
<dbReference type="SABIO-RK" id="Q4WQY4"/>
<dbReference type="Proteomes" id="UP000002530">
    <property type="component" value="Chromosome 4"/>
</dbReference>
<dbReference type="GO" id="GO:0050086">
    <property type="term" value="F:mannitol 2-dehydrogenase activity"/>
    <property type="evidence" value="ECO:0000314"/>
    <property type="project" value="UniProtKB"/>
</dbReference>
<dbReference type="GO" id="GO:0046029">
    <property type="term" value="F:mannitol dehydrogenase activity"/>
    <property type="evidence" value="ECO:0000318"/>
    <property type="project" value="GO_Central"/>
</dbReference>
<dbReference type="GO" id="GO:0051287">
    <property type="term" value="F:NAD binding"/>
    <property type="evidence" value="ECO:0000314"/>
    <property type="project" value="UniProtKB"/>
</dbReference>
<dbReference type="GO" id="GO:0050661">
    <property type="term" value="F:NADP binding"/>
    <property type="evidence" value="ECO:0000314"/>
    <property type="project" value="UniProtKB"/>
</dbReference>
<dbReference type="GO" id="GO:0019594">
    <property type="term" value="P:mannitol metabolic process"/>
    <property type="evidence" value="ECO:0000305"/>
    <property type="project" value="UniProtKB"/>
</dbReference>
<dbReference type="FunFam" id="3.40.50.720:FF:000129">
    <property type="entry name" value="D-mannonate oxidoreductase"/>
    <property type="match status" value="1"/>
</dbReference>
<dbReference type="FunFam" id="1.10.1040.10:FF:000028">
    <property type="entry name" value="Mannitol 2-dehydrogenase"/>
    <property type="match status" value="1"/>
</dbReference>
<dbReference type="Gene3D" id="1.10.1040.10">
    <property type="entry name" value="N-(1-d-carboxylethyl)-l-norvaline Dehydrogenase, domain 2"/>
    <property type="match status" value="1"/>
</dbReference>
<dbReference type="Gene3D" id="3.40.50.720">
    <property type="entry name" value="NAD(P)-binding Rossmann-like Domain"/>
    <property type="match status" value="1"/>
</dbReference>
<dbReference type="InterPro" id="IPR008927">
    <property type="entry name" value="6-PGluconate_DH-like_C_sf"/>
</dbReference>
<dbReference type="InterPro" id="IPR013328">
    <property type="entry name" value="6PGD_dom2"/>
</dbReference>
<dbReference type="InterPro" id="IPR000669">
    <property type="entry name" value="Mannitol_DH"/>
</dbReference>
<dbReference type="InterPro" id="IPR050988">
    <property type="entry name" value="Mannitol_DH/Oxidoreductase"/>
</dbReference>
<dbReference type="InterPro" id="IPR013118">
    <property type="entry name" value="Mannitol_DH_C"/>
</dbReference>
<dbReference type="InterPro" id="IPR013131">
    <property type="entry name" value="Mannitol_DH_N"/>
</dbReference>
<dbReference type="InterPro" id="IPR036291">
    <property type="entry name" value="NAD(P)-bd_dom_sf"/>
</dbReference>
<dbReference type="PANTHER" id="PTHR43362:SF1">
    <property type="entry name" value="MANNITOL DEHYDROGENASE 2-RELATED"/>
    <property type="match status" value="1"/>
</dbReference>
<dbReference type="PANTHER" id="PTHR43362">
    <property type="entry name" value="MANNITOL DEHYDROGENASE DSF1-RELATED"/>
    <property type="match status" value="1"/>
</dbReference>
<dbReference type="Pfam" id="PF01232">
    <property type="entry name" value="Mannitol_dh"/>
    <property type="match status" value="1"/>
</dbReference>
<dbReference type="Pfam" id="PF08125">
    <property type="entry name" value="Mannitol_dh_C"/>
    <property type="match status" value="1"/>
</dbReference>
<dbReference type="PRINTS" id="PR00084">
    <property type="entry name" value="MTLDHDRGNASE"/>
</dbReference>
<dbReference type="SUPFAM" id="SSF48179">
    <property type="entry name" value="6-phosphogluconate dehydrogenase C-terminal domain-like"/>
    <property type="match status" value="1"/>
</dbReference>
<dbReference type="SUPFAM" id="SSF51735">
    <property type="entry name" value="NAD(P)-binding Rossmann-fold domains"/>
    <property type="match status" value="1"/>
</dbReference>
<accession>Q4WQY4</accession>
<comment type="function">
    <text evidence="2">Catalyzes the NAD(H)-dependent interconversion of D-fructose and D-mannitol in the mannitol metabolic pathway. Has a preference for NADH over NADPH.</text>
</comment>
<comment type="catalytic activity">
    <reaction evidence="2">
        <text>D-mannitol + NAD(+) = D-fructose + NADH + H(+)</text>
        <dbReference type="Rhea" id="RHEA:12084"/>
        <dbReference type="ChEBI" id="CHEBI:15378"/>
        <dbReference type="ChEBI" id="CHEBI:16899"/>
        <dbReference type="ChEBI" id="CHEBI:37721"/>
        <dbReference type="ChEBI" id="CHEBI:57540"/>
        <dbReference type="ChEBI" id="CHEBI:57945"/>
        <dbReference type="EC" id="1.1.1.67"/>
    </reaction>
</comment>
<comment type="biophysicochemical properties">
    <kinetics>
        <KM evidence="2">13 mM for D-mannitol (in the presence of NAD(+))</KM>
        <KM evidence="2">82 mM for D-mannitol (in the presence of NADP(+))</KM>
        <KM evidence="2">60 mM for D-fructose (in the presence of NADH)</KM>
        <KM evidence="2">159 mM for D-fructose (in the presence of NADPH)</KM>
        <KM evidence="2">0.019 mM for NADH</KM>
        <KM evidence="2">0.15 mM for NAD(+)</KM>
    </kinetics>
</comment>
<comment type="subunit">
    <text evidence="2">Monomer.</text>
</comment>
<comment type="similarity">
    <text evidence="3">Belongs to the mannitol dehydrogenase family.</text>
</comment>
<feature type="chain" id="PRO_0000371540" description="Mannitol 2-dehydrogenase">
    <location>
        <begin position="1"/>
        <end position="502"/>
    </location>
</feature>
<feature type="binding site" evidence="1">
    <location>
        <begin position="37"/>
        <end position="48"/>
    </location>
    <ligand>
        <name>NAD(+)</name>
        <dbReference type="ChEBI" id="CHEBI:57540"/>
    </ligand>
</feature>
<feature type="turn" evidence="4">
    <location>
        <begin position="8"/>
        <end position="10"/>
    </location>
</feature>
<feature type="helix" evidence="4">
    <location>
        <begin position="11"/>
        <end position="17"/>
    </location>
</feature>
<feature type="helix" evidence="4">
    <location>
        <begin position="19"/>
        <end position="21"/>
    </location>
</feature>
<feature type="helix" evidence="4">
    <location>
        <begin position="30"/>
        <end position="32"/>
    </location>
</feature>
<feature type="strand" evidence="4">
    <location>
        <begin position="37"/>
        <end position="41"/>
    </location>
</feature>
<feature type="helix" evidence="4">
    <location>
        <begin position="44"/>
        <end position="48"/>
    </location>
</feature>
<feature type="helix" evidence="4">
    <location>
        <begin position="50"/>
        <end position="61"/>
    </location>
</feature>
<feature type="strand" evidence="4">
    <location>
        <begin position="68"/>
        <end position="72"/>
    </location>
</feature>
<feature type="helix" evidence="4">
    <location>
        <begin position="75"/>
        <end position="77"/>
    </location>
</feature>
<feature type="helix" evidence="4">
    <location>
        <begin position="78"/>
        <end position="85"/>
    </location>
</feature>
<feature type="turn" evidence="4">
    <location>
        <begin position="86"/>
        <end position="89"/>
    </location>
</feature>
<feature type="strand" evidence="4">
    <location>
        <begin position="91"/>
        <end position="97"/>
    </location>
</feature>
<feature type="strand" evidence="4">
    <location>
        <begin position="100"/>
        <end position="106"/>
    </location>
</feature>
<feature type="strand" evidence="4">
    <location>
        <begin position="109"/>
        <end position="114"/>
    </location>
</feature>
<feature type="helix" evidence="4">
    <location>
        <begin position="115"/>
        <end position="117"/>
    </location>
</feature>
<feature type="helix" evidence="4">
    <location>
        <begin position="119"/>
        <end position="127"/>
    </location>
</feature>
<feature type="strand" evidence="4">
    <location>
        <begin position="133"/>
        <end position="136"/>
    </location>
</feature>
<feature type="helix" evidence="4">
    <location>
        <begin position="140"/>
        <end position="143"/>
    </location>
</feature>
<feature type="turn" evidence="4">
    <location>
        <begin position="147"/>
        <end position="150"/>
    </location>
</feature>
<feature type="helix" evidence="4">
    <location>
        <begin position="157"/>
        <end position="163"/>
    </location>
</feature>
<feature type="helix" evidence="4">
    <location>
        <begin position="165"/>
        <end position="167"/>
    </location>
</feature>
<feature type="helix" evidence="4">
    <location>
        <begin position="174"/>
        <end position="187"/>
    </location>
</feature>
<feature type="strand" evidence="4">
    <location>
        <begin position="194"/>
        <end position="197"/>
    </location>
</feature>
<feature type="strand" evidence="4">
    <location>
        <begin position="199"/>
        <end position="201"/>
    </location>
</feature>
<feature type="helix" evidence="4">
    <location>
        <begin position="204"/>
        <end position="217"/>
    </location>
</feature>
<feature type="helix" evidence="4">
    <location>
        <begin position="221"/>
        <end position="230"/>
    </location>
</feature>
<feature type="strand" evidence="4">
    <location>
        <begin position="236"/>
        <end position="239"/>
    </location>
</feature>
<feature type="helix" evidence="4">
    <location>
        <begin position="247"/>
        <end position="257"/>
    </location>
</feature>
<feature type="strand" evidence="4">
    <location>
        <begin position="265"/>
        <end position="267"/>
    </location>
</feature>
<feature type="strand" evidence="4">
    <location>
        <begin position="272"/>
        <end position="277"/>
    </location>
</feature>
<feature type="helix" evidence="4">
    <location>
        <begin position="286"/>
        <end position="289"/>
    </location>
</feature>
<feature type="strand" evidence="4">
    <location>
        <begin position="292"/>
        <end position="296"/>
    </location>
</feature>
<feature type="helix" evidence="4">
    <location>
        <begin position="297"/>
        <end position="310"/>
    </location>
</feature>
<feature type="helix" evidence="4">
    <location>
        <begin position="312"/>
        <end position="325"/>
    </location>
</feature>
<feature type="helix" evidence="4">
    <location>
        <begin position="330"/>
        <end position="335"/>
    </location>
</feature>
<feature type="helix" evidence="4">
    <location>
        <begin position="337"/>
        <end position="349"/>
    </location>
</feature>
<feature type="helix" evidence="4">
    <location>
        <begin position="352"/>
        <end position="354"/>
    </location>
</feature>
<feature type="helix" evidence="4">
    <location>
        <begin position="363"/>
        <end position="375"/>
    </location>
</feature>
<feature type="strand" evidence="5">
    <location>
        <begin position="377"/>
        <end position="379"/>
    </location>
</feature>
<feature type="helix" evidence="4">
    <location>
        <begin position="383"/>
        <end position="387"/>
    </location>
</feature>
<feature type="helix" evidence="4">
    <location>
        <begin position="390"/>
        <end position="392"/>
    </location>
</feature>
<feature type="helix" evidence="4">
    <location>
        <begin position="394"/>
        <end position="397"/>
    </location>
</feature>
<feature type="helix" evidence="4">
    <location>
        <begin position="399"/>
        <end position="407"/>
    </location>
</feature>
<feature type="helix" evidence="4">
    <location>
        <begin position="413"/>
        <end position="425"/>
    </location>
</feature>
<feature type="helix" evidence="4">
    <location>
        <begin position="443"/>
        <end position="452"/>
    </location>
</feature>
<feature type="strand" evidence="4">
    <location>
        <begin position="453"/>
        <end position="455"/>
    </location>
</feature>
<feature type="helix" evidence="4">
    <location>
        <begin position="458"/>
        <end position="461"/>
    </location>
</feature>
<feature type="turn" evidence="4">
    <location>
        <begin position="464"/>
        <end position="466"/>
    </location>
</feature>
<feature type="helix" evidence="4">
    <location>
        <begin position="469"/>
        <end position="472"/>
    </location>
</feature>
<feature type="helix" evidence="4">
    <location>
        <begin position="475"/>
        <end position="491"/>
    </location>
</feature>
<feature type="helix" evidence="4">
    <location>
        <begin position="493"/>
        <end position="496"/>
    </location>
</feature>
<feature type="helix" evidence="4">
    <location>
        <begin position="497"/>
        <end position="500"/>
    </location>
</feature>
<evidence type="ECO:0000250" key="1"/>
<evidence type="ECO:0000269" key="2">
    <source>
    </source>
</evidence>
<evidence type="ECO:0000305" key="3"/>
<evidence type="ECO:0007829" key="4">
    <source>
        <dbReference type="PDB" id="7RK4"/>
    </source>
</evidence>
<evidence type="ECO:0007829" key="5">
    <source>
        <dbReference type="PDB" id="7RK5"/>
    </source>
</evidence>
<keyword id="KW-0002">3D-structure</keyword>
<keyword id="KW-0520">NAD</keyword>
<keyword id="KW-0521">NADP</keyword>
<keyword id="KW-0560">Oxidoreductase</keyword>
<keyword id="KW-1185">Reference proteome</keyword>